<keyword id="KW-0963">Cytoplasm</keyword>
<comment type="subcellular location">
    <subcellularLocation>
        <location evidence="1">Cytoplasm</location>
    </subcellularLocation>
</comment>
<comment type="similarity">
    <text evidence="1">Belongs to the CutC family.</text>
</comment>
<comment type="caution">
    <text evidence="1">Once thought to be involved in copper homeostasis, experiments in E.coli have shown this is not the case.</text>
</comment>
<evidence type="ECO:0000255" key="1">
    <source>
        <dbReference type="HAMAP-Rule" id="MF_00795"/>
    </source>
</evidence>
<accession>A7MT89</accession>
<gene>
    <name evidence="1" type="primary">cutC</name>
    <name type="ordered locus">VIBHAR_01038</name>
</gene>
<proteinExistence type="inferred from homology"/>
<sequence length="247" mass="26420">MNTQLEVCIDNIESLHNAIAGGPTRIELCSSLALGGLTPSYGFMQQAAKHSTIPVYAMIRPRQGDFFYSEEEIELMRWDIEAAKQAGLNGVVLGVLTQDGNIHMPYATALCEFAQALGLGVTFHRAFDQCRDAEKALEEVISLGCERILTSGLAPSAPQGIDVLKALVEQAQGRIALMAGAGVNADNVGQIVEQTKVTEVHLSGKTTRPSHMTFIAEQSKMGAADVDDFSIPVTNTDAIANMVTALN</sequence>
<protein>
    <recommendedName>
        <fullName evidence="1">PF03932 family protein CutC</fullName>
    </recommendedName>
</protein>
<organism>
    <name type="scientific">Vibrio campbellii (strain ATCC BAA-1116)</name>
    <dbReference type="NCBI Taxonomy" id="2902295"/>
    <lineage>
        <taxon>Bacteria</taxon>
        <taxon>Pseudomonadati</taxon>
        <taxon>Pseudomonadota</taxon>
        <taxon>Gammaproteobacteria</taxon>
        <taxon>Vibrionales</taxon>
        <taxon>Vibrionaceae</taxon>
        <taxon>Vibrio</taxon>
    </lineage>
</organism>
<reference key="1">
    <citation type="submission" date="2007-08" db="EMBL/GenBank/DDBJ databases">
        <authorList>
            <consortium name="The Vibrio harveyi Genome Sequencing Project"/>
            <person name="Bassler B."/>
            <person name="Clifton S.W."/>
            <person name="Fulton L."/>
            <person name="Delehaunty K."/>
            <person name="Fronick C."/>
            <person name="Harrison M."/>
            <person name="Markivic C."/>
            <person name="Fulton R."/>
            <person name="Tin-Wollam A.-M."/>
            <person name="Shah N."/>
            <person name="Pepin K."/>
            <person name="Nash W."/>
            <person name="Thiruvilangam P."/>
            <person name="Bhonagiri V."/>
            <person name="Waters C."/>
            <person name="Tu K.C."/>
            <person name="Irgon J."/>
            <person name="Wilson R.K."/>
        </authorList>
    </citation>
    <scope>NUCLEOTIDE SEQUENCE [LARGE SCALE GENOMIC DNA]</scope>
    <source>
        <strain>ATCC BAA-1116 / BB120</strain>
    </source>
</reference>
<name>CUTC_VIBC1</name>
<dbReference type="EMBL" id="CP000789">
    <property type="protein sequence ID" value="ABU70031.1"/>
    <property type="molecule type" value="Genomic_DNA"/>
</dbReference>
<dbReference type="RefSeq" id="WP_012127077.1">
    <property type="nucleotide sequence ID" value="NC_009783.1"/>
</dbReference>
<dbReference type="SMR" id="A7MT89"/>
<dbReference type="KEGG" id="vha:VIBHAR_01038"/>
<dbReference type="PATRIC" id="fig|338187.25.peg.1590"/>
<dbReference type="Proteomes" id="UP000008152">
    <property type="component" value="Chromosome I"/>
</dbReference>
<dbReference type="GO" id="GO:0005737">
    <property type="term" value="C:cytoplasm"/>
    <property type="evidence" value="ECO:0007669"/>
    <property type="project" value="UniProtKB-SubCell"/>
</dbReference>
<dbReference type="GO" id="GO:0005507">
    <property type="term" value="F:copper ion binding"/>
    <property type="evidence" value="ECO:0007669"/>
    <property type="project" value="TreeGrafter"/>
</dbReference>
<dbReference type="FunFam" id="3.20.20.380:FF:000001">
    <property type="entry name" value="Copper homeostasis protein CutC"/>
    <property type="match status" value="1"/>
</dbReference>
<dbReference type="Gene3D" id="3.20.20.380">
    <property type="entry name" value="Copper homeostasis (CutC) domain"/>
    <property type="match status" value="1"/>
</dbReference>
<dbReference type="HAMAP" id="MF_00795">
    <property type="entry name" value="CutC"/>
    <property type="match status" value="1"/>
</dbReference>
<dbReference type="InterPro" id="IPR005627">
    <property type="entry name" value="CutC-like"/>
</dbReference>
<dbReference type="InterPro" id="IPR036822">
    <property type="entry name" value="CutC-like_dom_sf"/>
</dbReference>
<dbReference type="PANTHER" id="PTHR12598">
    <property type="entry name" value="COPPER HOMEOSTASIS PROTEIN CUTC"/>
    <property type="match status" value="1"/>
</dbReference>
<dbReference type="PANTHER" id="PTHR12598:SF0">
    <property type="entry name" value="COPPER HOMEOSTASIS PROTEIN CUTC HOMOLOG"/>
    <property type="match status" value="1"/>
</dbReference>
<dbReference type="Pfam" id="PF03932">
    <property type="entry name" value="CutC"/>
    <property type="match status" value="1"/>
</dbReference>
<dbReference type="SUPFAM" id="SSF110395">
    <property type="entry name" value="CutC-like"/>
    <property type="match status" value="1"/>
</dbReference>
<feature type="chain" id="PRO_1000046947" description="PF03932 family protein CutC">
    <location>
        <begin position="1"/>
        <end position="247"/>
    </location>
</feature>